<name>L10K_BOVIN</name>
<proteinExistence type="inferred from homology"/>
<reference key="1">
    <citation type="submission" date="2006-06" db="EMBL/GenBank/DDBJ databases">
        <authorList>
            <consortium name="NIH - Mammalian Gene Collection (MGC) project"/>
        </authorList>
    </citation>
    <scope>NUCLEOTIDE SEQUENCE [LARGE SCALE MRNA]</scope>
    <source>
        <strain>Hereford</strain>
        <tissue>Brain cortex</tissue>
    </source>
</reference>
<protein>
    <recommendedName>
        <fullName>Leydig cell tumor 10 kDa protein homolog</fullName>
    </recommendedName>
</protein>
<comment type="function">
    <text evidence="1">May have a potential role in hypercalcemia of malignancy.</text>
</comment>
<comment type="similarity">
    <text evidence="3">Belongs to the UPF0390 family.</text>
</comment>
<evidence type="ECO:0000250" key="1"/>
<evidence type="ECO:0000256" key="2">
    <source>
        <dbReference type="SAM" id="MobiDB-lite"/>
    </source>
</evidence>
<evidence type="ECO:0000305" key="3"/>
<feature type="chain" id="PRO_0000255270" description="Leydig cell tumor 10 kDa protein homolog">
    <location>
        <begin position="1"/>
        <end position="98"/>
    </location>
</feature>
<feature type="region of interest" description="Disordered" evidence="2">
    <location>
        <begin position="1"/>
        <end position="38"/>
    </location>
</feature>
<feature type="region of interest" description="Disordered" evidence="2">
    <location>
        <begin position="73"/>
        <end position="98"/>
    </location>
</feature>
<feature type="compositionally biased region" description="Low complexity" evidence="2">
    <location>
        <begin position="16"/>
        <end position="25"/>
    </location>
</feature>
<feature type="compositionally biased region" description="Basic residues" evidence="2">
    <location>
        <begin position="28"/>
        <end position="38"/>
    </location>
</feature>
<feature type="compositionally biased region" description="Low complexity" evidence="2">
    <location>
        <begin position="73"/>
        <end position="83"/>
    </location>
</feature>
<sequence>MAQGQRKFQAQKPAKSKAAAAAASARNRGPRKGGRVIAPKKARIVQQQQLKKNLEVGIRKKIEHDVVMKASTSLPKKLALLKASTKKKEASSSTKMPA</sequence>
<organism>
    <name type="scientific">Bos taurus</name>
    <name type="common">Bovine</name>
    <dbReference type="NCBI Taxonomy" id="9913"/>
    <lineage>
        <taxon>Eukaryota</taxon>
        <taxon>Metazoa</taxon>
        <taxon>Chordata</taxon>
        <taxon>Craniata</taxon>
        <taxon>Vertebrata</taxon>
        <taxon>Euteleostomi</taxon>
        <taxon>Mammalia</taxon>
        <taxon>Eutheria</taxon>
        <taxon>Laurasiatheria</taxon>
        <taxon>Artiodactyla</taxon>
        <taxon>Ruminantia</taxon>
        <taxon>Pecora</taxon>
        <taxon>Bovidae</taxon>
        <taxon>Bovinae</taxon>
        <taxon>Bos</taxon>
    </lineage>
</organism>
<accession>Q148I0</accession>
<keyword id="KW-1185">Reference proteome</keyword>
<dbReference type="EMBL" id="BC118308">
    <property type="protein sequence ID" value="AAI18309.1"/>
    <property type="molecule type" value="mRNA"/>
</dbReference>
<dbReference type="RefSeq" id="NP_001069813.1">
    <property type="nucleotide sequence ID" value="NM_001076345.2"/>
</dbReference>
<dbReference type="SMR" id="Q148I0"/>
<dbReference type="FunCoup" id="Q148I0">
    <property type="interactions" value="1446"/>
</dbReference>
<dbReference type="STRING" id="9913.ENSBTAP00000003276"/>
<dbReference type="PaxDb" id="9913-ENSBTAP00000003276"/>
<dbReference type="GeneID" id="614800"/>
<dbReference type="KEGG" id="bta:614800"/>
<dbReference type="CTD" id="614800"/>
<dbReference type="VEuPathDB" id="HostDB:ENSBTAG00000002525"/>
<dbReference type="eggNOG" id="ENOG502S8BT">
    <property type="taxonomic scope" value="Eukaryota"/>
</dbReference>
<dbReference type="HOGENOM" id="CLU_182392_0_0_1"/>
<dbReference type="InParanoid" id="Q148I0"/>
<dbReference type="OMA" id="IEHETAM"/>
<dbReference type="OrthoDB" id="5239630at2759"/>
<dbReference type="TreeFam" id="TF333384"/>
<dbReference type="Proteomes" id="UP000009136">
    <property type="component" value="Chromosome 7"/>
</dbReference>
<dbReference type="Bgee" id="ENSBTAG00000002525">
    <property type="expression patterns" value="Expressed in isthmus of fallopian tube and 105 other cell types or tissues"/>
</dbReference>
<dbReference type="InterPro" id="IPR019034">
    <property type="entry name" value="UPF0390"/>
</dbReference>
<dbReference type="PANTHER" id="PTHR16967">
    <property type="entry name" value="LEYDIG CELL TUMOR 10 KDA PROTEIN HOMOLOG"/>
    <property type="match status" value="1"/>
</dbReference>
<dbReference type="PANTHER" id="PTHR16967:SF1">
    <property type="entry name" value="LEYDIG CELL TUMOR 10 KDA PROTEIN HOMOLOG"/>
    <property type="match status" value="1"/>
</dbReference>
<dbReference type="Pfam" id="PF09495">
    <property type="entry name" value="DUF2462"/>
    <property type="match status" value="1"/>
</dbReference>